<gene>
    <name evidence="1" type="primary">bamD</name>
    <name type="ordered locus">PD_1756</name>
</gene>
<feature type="signal peptide" evidence="1">
    <location>
        <begin position="1"/>
        <end position="26"/>
    </location>
</feature>
<feature type="chain" id="PRO_0000036235" description="Outer membrane protein assembly factor BamD">
    <location>
        <begin position="27"/>
        <end position="293"/>
    </location>
</feature>
<feature type="lipid moiety-binding region" description="N-palmitoyl cysteine" evidence="1">
    <location>
        <position position="27"/>
    </location>
</feature>
<feature type="lipid moiety-binding region" description="S-diacylglycerol cysteine" evidence="1">
    <location>
        <position position="27"/>
    </location>
</feature>
<proteinExistence type="inferred from homology"/>
<reference key="1">
    <citation type="journal article" date="2003" name="J. Bacteriol.">
        <title>Comparative analyses of the complete genome sequences of Pierce's disease and citrus variegated chlorosis strains of Xylella fastidiosa.</title>
        <authorList>
            <person name="Van Sluys M.A."/>
            <person name="de Oliveira M.C."/>
            <person name="Monteiro-Vitorello C.B."/>
            <person name="Miyaki C.Y."/>
            <person name="Furlan L.R."/>
            <person name="Camargo L.E.A."/>
            <person name="da Silva A.C.R."/>
            <person name="Moon D.H."/>
            <person name="Takita M.A."/>
            <person name="Lemos E.G.M."/>
            <person name="Machado M.A."/>
            <person name="Ferro M.I.T."/>
            <person name="da Silva F.R."/>
            <person name="Goldman M.H.S."/>
            <person name="Goldman G.H."/>
            <person name="Lemos M.V.F."/>
            <person name="El-Dorry H."/>
            <person name="Tsai S.M."/>
            <person name="Carrer H."/>
            <person name="Carraro D.M."/>
            <person name="de Oliveira R.C."/>
            <person name="Nunes L.R."/>
            <person name="Siqueira W.J."/>
            <person name="Coutinho L.L."/>
            <person name="Kimura E.T."/>
            <person name="Ferro E.S."/>
            <person name="Harakava R."/>
            <person name="Kuramae E.E."/>
            <person name="Marino C.L."/>
            <person name="Giglioti E."/>
            <person name="Abreu I.L."/>
            <person name="Alves L.M.C."/>
            <person name="do Amaral A.M."/>
            <person name="Baia G.S."/>
            <person name="Blanco S.R."/>
            <person name="Brito M.S."/>
            <person name="Cannavan F.S."/>
            <person name="Celestino A.V."/>
            <person name="da Cunha A.F."/>
            <person name="Fenille R.C."/>
            <person name="Ferro J.A."/>
            <person name="Formighieri E.F."/>
            <person name="Kishi L.T."/>
            <person name="Leoni S.G."/>
            <person name="Oliveira A.R."/>
            <person name="Rosa V.E. Jr."/>
            <person name="Sassaki F.T."/>
            <person name="Sena J.A.D."/>
            <person name="de Souza A.A."/>
            <person name="Truffi D."/>
            <person name="Tsukumo F."/>
            <person name="Yanai G.M."/>
            <person name="Zaros L.G."/>
            <person name="Civerolo E.L."/>
            <person name="Simpson A.J.G."/>
            <person name="Almeida N.F. Jr."/>
            <person name="Setubal J.C."/>
            <person name="Kitajima J.P."/>
        </authorList>
    </citation>
    <scope>NUCLEOTIDE SEQUENCE [LARGE SCALE GENOMIC DNA]</scope>
    <source>
        <strain>Temecula1 / ATCC 700964</strain>
    </source>
</reference>
<comment type="function">
    <text evidence="1">Part of the outer membrane protein assembly complex, which is involved in assembly and insertion of beta-barrel proteins into the outer membrane.</text>
</comment>
<comment type="subunit">
    <text evidence="1">Part of the Bam complex.</text>
</comment>
<comment type="subcellular location">
    <subcellularLocation>
        <location evidence="1">Cell outer membrane</location>
        <topology evidence="1">Lipid-anchor</topology>
    </subcellularLocation>
</comment>
<comment type="similarity">
    <text evidence="1">Belongs to the BamD family.</text>
</comment>
<comment type="sequence caution" evidence="2">
    <conflict type="erroneous initiation">
        <sequence resource="EMBL-CDS" id="AAO29590"/>
    </conflict>
    <text>Extended N-terminus.</text>
</comment>
<dbReference type="EMBL" id="AE009442">
    <property type="protein sequence ID" value="AAO29590.1"/>
    <property type="status" value="ALT_INIT"/>
    <property type="molecule type" value="Genomic_DNA"/>
</dbReference>
<dbReference type="RefSeq" id="WP_004089657.1">
    <property type="nucleotide sequence ID" value="NC_004556.1"/>
</dbReference>
<dbReference type="SMR" id="Q87AR6"/>
<dbReference type="KEGG" id="xft:PD_1756"/>
<dbReference type="HOGENOM" id="CLU_065982_0_2_6"/>
<dbReference type="Proteomes" id="UP000002516">
    <property type="component" value="Chromosome"/>
</dbReference>
<dbReference type="GO" id="GO:1990063">
    <property type="term" value="C:Bam protein complex"/>
    <property type="evidence" value="ECO:0007669"/>
    <property type="project" value="TreeGrafter"/>
</dbReference>
<dbReference type="GO" id="GO:0043165">
    <property type="term" value="P:Gram-negative-bacterium-type cell outer membrane assembly"/>
    <property type="evidence" value="ECO:0007669"/>
    <property type="project" value="UniProtKB-UniRule"/>
</dbReference>
<dbReference type="GO" id="GO:0051205">
    <property type="term" value="P:protein insertion into membrane"/>
    <property type="evidence" value="ECO:0007669"/>
    <property type="project" value="UniProtKB-UniRule"/>
</dbReference>
<dbReference type="CDD" id="cd15830">
    <property type="entry name" value="BamD"/>
    <property type="match status" value="1"/>
</dbReference>
<dbReference type="Gene3D" id="1.25.40.10">
    <property type="entry name" value="Tetratricopeptide repeat domain"/>
    <property type="match status" value="1"/>
</dbReference>
<dbReference type="HAMAP" id="MF_00922">
    <property type="entry name" value="OM_assembly_BamD"/>
    <property type="match status" value="1"/>
</dbReference>
<dbReference type="InterPro" id="IPR017689">
    <property type="entry name" value="BamD"/>
</dbReference>
<dbReference type="InterPro" id="IPR039565">
    <property type="entry name" value="BamD-like"/>
</dbReference>
<dbReference type="InterPro" id="IPR011990">
    <property type="entry name" value="TPR-like_helical_dom_sf"/>
</dbReference>
<dbReference type="NCBIfam" id="TIGR03302">
    <property type="entry name" value="OM_YfiO"/>
    <property type="match status" value="1"/>
</dbReference>
<dbReference type="PANTHER" id="PTHR37423:SF1">
    <property type="entry name" value="OUTER MEMBRANE PROTEIN ASSEMBLY FACTOR BAMD"/>
    <property type="match status" value="1"/>
</dbReference>
<dbReference type="PANTHER" id="PTHR37423">
    <property type="entry name" value="SOLUBLE LYTIC MUREIN TRANSGLYCOSYLASE-RELATED"/>
    <property type="match status" value="1"/>
</dbReference>
<dbReference type="Pfam" id="PF13525">
    <property type="entry name" value="YfiO"/>
    <property type="match status" value="1"/>
</dbReference>
<dbReference type="SUPFAM" id="SSF48452">
    <property type="entry name" value="TPR-like"/>
    <property type="match status" value="1"/>
</dbReference>
<dbReference type="PROSITE" id="PS51257">
    <property type="entry name" value="PROKAR_LIPOPROTEIN"/>
    <property type="match status" value="1"/>
</dbReference>
<keyword id="KW-0998">Cell outer membrane</keyword>
<keyword id="KW-0449">Lipoprotein</keyword>
<keyword id="KW-0472">Membrane</keyword>
<keyword id="KW-0564">Palmitate</keyword>
<keyword id="KW-1185">Reference proteome</keyword>
<keyword id="KW-0732">Signal</keyword>
<name>BAMD_XYLFT</name>
<evidence type="ECO:0000255" key="1">
    <source>
        <dbReference type="HAMAP-Rule" id="MF_00922"/>
    </source>
</evidence>
<evidence type="ECO:0000305" key="2"/>
<accession>Q87AR6</accession>
<protein>
    <recommendedName>
        <fullName evidence="1">Outer membrane protein assembly factor BamD</fullName>
    </recommendedName>
</protein>
<sequence>MIQRPTFFSPIHLLAVLLATFILITGCHRETKKNADDGMPVEHLYDKAHTLMKKGNWAGAELSFKRLIAQYPYGPYTEQAMVENAYAQYKSGKHDDAVSSIDRFIRTYPTHHNIPYMYYLRGLSNSNRDTIFLRKVWSLDLSRRDLSAPQQAYNDFKTVLDRYPNSRYATDAKKQMTELRNMFAQYEMNVTLYYLRRTAWVAAAGRANFLLETYPQSPFQYDAVAALGEAYTHLGNKTLADNARQVLQTNAPDHPWLKGKKWPKYPAAIRKLNPFAGEKSAATGQTNAVVNSN</sequence>
<organism>
    <name type="scientific">Xylella fastidiosa (strain Temecula1 / ATCC 700964)</name>
    <dbReference type="NCBI Taxonomy" id="183190"/>
    <lineage>
        <taxon>Bacteria</taxon>
        <taxon>Pseudomonadati</taxon>
        <taxon>Pseudomonadota</taxon>
        <taxon>Gammaproteobacteria</taxon>
        <taxon>Lysobacterales</taxon>
        <taxon>Lysobacteraceae</taxon>
        <taxon>Xylella</taxon>
    </lineage>
</organism>